<proteinExistence type="inferred from homology"/>
<evidence type="ECO:0000255" key="1">
    <source>
        <dbReference type="HAMAP-Rule" id="MF_01365"/>
    </source>
</evidence>
<evidence type="ECO:0000305" key="2"/>
<accession>A5VLJ0</accession>
<name>RL6_LIMRD</name>
<keyword id="KW-1185">Reference proteome</keyword>
<keyword id="KW-0687">Ribonucleoprotein</keyword>
<keyword id="KW-0689">Ribosomal protein</keyword>
<keyword id="KW-0694">RNA-binding</keyword>
<keyword id="KW-0699">rRNA-binding</keyword>
<gene>
    <name evidence="1" type="primary">rplF</name>
    <name type="ordered locus">Lreu_1468</name>
</gene>
<protein>
    <recommendedName>
        <fullName evidence="1">Large ribosomal subunit protein uL6</fullName>
    </recommendedName>
    <alternativeName>
        <fullName evidence="2">50S ribosomal protein L6</fullName>
    </alternativeName>
</protein>
<reference key="1">
    <citation type="journal article" date="2011" name="PLoS Genet.">
        <title>The evolution of host specialization in the vertebrate gut symbiont Lactobacillus reuteri.</title>
        <authorList>
            <person name="Frese S.A."/>
            <person name="Benson A.K."/>
            <person name="Tannock G.W."/>
            <person name="Loach D.M."/>
            <person name="Kim J."/>
            <person name="Zhang M."/>
            <person name="Oh P.L."/>
            <person name="Heng N.C."/>
            <person name="Patil P.B."/>
            <person name="Juge N."/>
            <person name="Mackenzie D.A."/>
            <person name="Pearson B.M."/>
            <person name="Lapidus A."/>
            <person name="Dalin E."/>
            <person name="Tice H."/>
            <person name="Goltsman E."/>
            <person name="Land M."/>
            <person name="Hauser L."/>
            <person name="Ivanova N."/>
            <person name="Kyrpides N.C."/>
            <person name="Walter J."/>
        </authorList>
    </citation>
    <scope>NUCLEOTIDE SEQUENCE [LARGE SCALE GENOMIC DNA]</scope>
    <source>
        <strain>DSM 20016</strain>
    </source>
</reference>
<dbReference type="EMBL" id="CP000705">
    <property type="protein sequence ID" value="ABQ83714.1"/>
    <property type="molecule type" value="Genomic_DNA"/>
</dbReference>
<dbReference type="RefSeq" id="WP_003664544.1">
    <property type="nucleotide sequence ID" value="NZ_AZDD01000010.1"/>
</dbReference>
<dbReference type="SMR" id="A5VLJ0"/>
<dbReference type="STRING" id="557436.Lreu_1468"/>
<dbReference type="GeneID" id="77191464"/>
<dbReference type="KEGG" id="lre:Lreu_1468"/>
<dbReference type="PATRIC" id="fig|557436.17.peg.155"/>
<dbReference type="eggNOG" id="COG0097">
    <property type="taxonomic scope" value="Bacteria"/>
</dbReference>
<dbReference type="HOGENOM" id="CLU_065464_1_2_9"/>
<dbReference type="Proteomes" id="UP000001991">
    <property type="component" value="Chromosome"/>
</dbReference>
<dbReference type="GO" id="GO:0022625">
    <property type="term" value="C:cytosolic large ribosomal subunit"/>
    <property type="evidence" value="ECO:0007669"/>
    <property type="project" value="TreeGrafter"/>
</dbReference>
<dbReference type="GO" id="GO:0019843">
    <property type="term" value="F:rRNA binding"/>
    <property type="evidence" value="ECO:0007669"/>
    <property type="project" value="UniProtKB-UniRule"/>
</dbReference>
<dbReference type="GO" id="GO:0003735">
    <property type="term" value="F:structural constituent of ribosome"/>
    <property type="evidence" value="ECO:0007669"/>
    <property type="project" value="InterPro"/>
</dbReference>
<dbReference type="GO" id="GO:0002181">
    <property type="term" value="P:cytoplasmic translation"/>
    <property type="evidence" value="ECO:0007669"/>
    <property type="project" value="TreeGrafter"/>
</dbReference>
<dbReference type="FunFam" id="3.90.930.12:FF:000001">
    <property type="entry name" value="50S ribosomal protein L6"/>
    <property type="match status" value="1"/>
</dbReference>
<dbReference type="FunFam" id="3.90.930.12:FF:000002">
    <property type="entry name" value="50S ribosomal protein L6"/>
    <property type="match status" value="1"/>
</dbReference>
<dbReference type="Gene3D" id="3.90.930.12">
    <property type="entry name" value="Ribosomal protein L6, alpha-beta domain"/>
    <property type="match status" value="2"/>
</dbReference>
<dbReference type="HAMAP" id="MF_01365_B">
    <property type="entry name" value="Ribosomal_uL6_B"/>
    <property type="match status" value="1"/>
</dbReference>
<dbReference type="InterPro" id="IPR000702">
    <property type="entry name" value="Ribosomal_uL6-like"/>
</dbReference>
<dbReference type="InterPro" id="IPR036789">
    <property type="entry name" value="Ribosomal_uL6-like_a/b-dom_sf"/>
</dbReference>
<dbReference type="InterPro" id="IPR020040">
    <property type="entry name" value="Ribosomal_uL6_a/b-dom"/>
</dbReference>
<dbReference type="InterPro" id="IPR019906">
    <property type="entry name" value="Ribosomal_uL6_bac-type"/>
</dbReference>
<dbReference type="InterPro" id="IPR002358">
    <property type="entry name" value="Ribosomal_uL6_CS"/>
</dbReference>
<dbReference type="NCBIfam" id="TIGR03654">
    <property type="entry name" value="L6_bact"/>
    <property type="match status" value="1"/>
</dbReference>
<dbReference type="PANTHER" id="PTHR11655">
    <property type="entry name" value="60S/50S RIBOSOMAL PROTEIN L6/L9"/>
    <property type="match status" value="1"/>
</dbReference>
<dbReference type="PANTHER" id="PTHR11655:SF14">
    <property type="entry name" value="LARGE RIBOSOMAL SUBUNIT PROTEIN UL6M"/>
    <property type="match status" value="1"/>
</dbReference>
<dbReference type="Pfam" id="PF00347">
    <property type="entry name" value="Ribosomal_L6"/>
    <property type="match status" value="2"/>
</dbReference>
<dbReference type="PIRSF" id="PIRSF002162">
    <property type="entry name" value="Ribosomal_L6"/>
    <property type="match status" value="1"/>
</dbReference>
<dbReference type="PRINTS" id="PR00059">
    <property type="entry name" value="RIBOSOMALL6"/>
</dbReference>
<dbReference type="SUPFAM" id="SSF56053">
    <property type="entry name" value="Ribosomal protein L6"/>
    <property type="match status" value="2"/>
</dbReference>
<dbReference type="PROSITE" id="PS00525">
    <property type="entry name" value="RIBOSOMAL_L6_1"/>
    <property type="match status" value="1"/>
</dbReference>
<organism>
    <name type="scientific">Limosilactobacillus reuteri (strain DSM 20016)</name>
    <name type="common">Lactobacillus reuteri</name>
    <dbReference type="NCBI Taxonomy" id="557436"/>
    <lineage>
        <taxon>Bacteria</taxon>
        <taxon>Bacillati</taxon>
        <taxon>Bacillota</taxon>
        <taxon>Bacilli</taxon>
        <taxon>Lactobacillales</taxon>
        <taxon>Lactobacillaceae</taxon>
        <taxon>Limosilactobacillus</taxon>
    </lineage>
</organism>
<feature type="chain" id="PRO_1000067980" description="Large ribosomal subunit protein uL6">
    <location>
        <begin position="1"/>
        <end position="178"/>
    </location>
</feature>
<sequence length="178" mass="19636">MSRIGYKEIDLPSGVEISQDGNVVTVKGPKGTLSREISPLIKMTIDGNVVKFDRDADTNKLKMLHGTTRANVNNMVEGVVDGYKKVLKLVGVGYRAQLKGNKLILTVGYSNPVEMDKPEDVEINVPDNTTIELSSINKEHLGNFAAEVRAVRSPEPYKGKGIRYENEHIIRKEGKTGK</sequence>
<comment type="function">
    <text evidence="1">This protein binds to the 23S rRNA, and is important in its secondary structure. It is located near the subunit interface in the base of the L7/L12 stalk, and near the tRNA binding site of the peptidyltransferase center.</text>
</comment>
<comment type="subunit">
    <text evidence="1">Part of the 50S ribosomal subunit.</text>
</comment>
<comment type="similarity">
    <text evidence="1">Belongs to the universal ribosomal protein uL6 family.</text>
</comment>